<organism>
    <name type="scientific">Niallia circulans</name>
    <name type="common">Bacillus circulans</name>
    <dbReference type="NCBI Taxonomy" id="1397"/>
    <lineage>
        <taxon>Bacteria</taxon>
        <taxon>Bacillati</taxon>
        <taxon>Bacillota</taxon>
        <taxon>Bacilli</taxon>
        <taxon>Bacillales</taxon>
        <taxon>Bacillaceae</taxon>
        <taxon>Niallia</taxon>
    </lineage>
</organism>
<sequence length="575" mass="62899">MLHSQKRIWKKIGLCLLSFILGITVFTGSFGSKAEAAVAGDFQVSVMGPLAKVTDWNSFKNQLTTLKNNGVYAITTDVWWGYVESAGDNQFDWSYYKTYADTVKQAGLKWVPIISTHRCGGNVGDDCNIPLPSWLWSKGSADEMQFKDESGYVNNESLSPFWSGVGKQYDELYASFAQNFSAYKDMIPKIYLSGGPSGELRYPSYYPAAGWSYPARGKFQVYTETAKSAFRTAMTTKYGSLDKINAAWGTNLTSMSQISPPTDSDGFYTGGGYNITYGKDFLSWYQSVLENHLGVIGAAAHKNFDPVFGVRIGAKISGIHWQMNNPSMPHSAEHAGGYYDYNRLIQKFKDTDLDLTFTALEMYDSGTAPNYSLPSTLVDTVSSIANSKGVRLNGENALPTGGSGFQKIEEKITRFGYNGFTLLRINNIVNSDGSPTAEMSSFKNYVIKHAKPAGDGGGNPVNSVTIYYKKGFNSPYIHYRPAGGTWTDVPGVKMPDSEISGYAKITLDIGSASQLEAAFNDGNNQWDSNNMRNYFFSPGTSTYIPGTNGTAGSIQAGPPITSSDFQALPAYEMSI</sequence>
<name>AMYB_NIACI</name>
<reference key="1">
    <citation type="journal article" date="1987" name="Mol. Microbiol.">
        <title>Molecular cloning and characterization of the beta-amylase gene from Bacillus circulans.</title>
        <authorList>
            <person name="Siggens K.W."/>
        </authorList>
    </citation>
    <scope>NUCLEOTIDE SEQUENCE [GENOMIC DNA]</scope>
    <source>
        <strain>BCRC 12254 / NCIMB 11033</strain>
    </source>
</reference>
<keyword id="KW-0119">Carbohydrate metabolism</keyword>
<keyword id="KW-1015">Disulfide bond</keyword>
<keyword id="KW-0326">Glycosidase</keyword>
<keyword id="KW-0378">Hydrolase</keyword>
<keyword id="KW-0479">Metal-binding</keyword>
<keyword id="KW-0624">Polysaccharide degradation</keyword>
<keyword id="KW-0732">Signal</keyword>
<protein>
    <recommendedName>
        <fullName>Beta-amylase</fullName>
        <ecNumber>3.2.1.2</ecNumber>
    </recommendedName>
    <alternativeName>
        <fullName>1,4-alpha-D-glucan maltohydrolase</fullName>
    </alternativeName>
</protein>
<feature type="signal peptide">
    <location>
        <begin position="1"/>
        <end position="36"/>
    </location>
</feature>
<feature type="chain" id="PRO_0000001454" description="Beta-amylase">
    <location>
        <begin position="37"/>
        <end position="575"/>
    </location>
</feature>
<feature type="active site" description="Proton donor" evidence="2">
    <location>
        <position position="199"/>
    </location>
</feature>
<feature type="active site" description="Proton acceptor" evidence="1">
    <location>
        <position position="395"/>
    </location>
</feature>
<feature type="binding site" evidence="1">
    <location>
        <position position="77"/>
    </location>
    <ligand>
        <name>substrate</name>
    </ligand>
</feature>
<feature type="binding site" evidence="1">
    <location>
        <position position="84"/>
    </location>
    <ligand>
        <name>Ca(2+)</name>
        <dbReference type="ChEBI" id="CHEBI:29108"/>
    </ligand>
</feature>
<feature type="binding site" evidence="1">
    <location>
        <position position="88"/>
    </location>
    <ligand>
        <name>Ca(2+)</name>
        <dbReference type="ChEBI" id="CHEBI:29108"/>
    </ligand>
</feature>
<feature type="binding site" evidence="1">
    <location>
        <position position="117"/>
    </location>
    <ligand>
        <name>substrate</name>
    </ligand>
</feature>
<feature type="binding site" evidence="1">
    <location>
        <position position="125"/>
    </location>
    <ligand>
        <name>substrate</name>
    </ligand>
</feature>
<feature type="binding site" evidence="1">
    <location>
        <position position="171"/>
    </location>
    <ligand>
        <name>Ca(2+)</name>
        <dbReference type="ChEBI" id="CHEBI:29108"/>
    </ligand>
</feature>
<feature type="binding site" evidence="1">
    <location>
        <position position="315"/>
    </location>
    <ligand>
        <name>substrate</name>
    </ligand>
</feature>
<feature type="binding site" evidence="1">
    <location>
        <position position="320"/>
    </location>
    <ligand>
        <name>substrate</name>
    </ligand>
</feature>
<feature type="binding site" evidence="1">
    <location>
        <position position="358"/>
    </location>
    <ligand>
        <name>substrate</name>
    </ligand>
</feature>
<feature type="binding site" evidence="1">
    <location>
        <begin position="396"/>
        <end position="397"/>
    </location>
    <ligand>
        <name>substrate</name>
    </ligand>
</feature>
<feature type="binding site" evidence="1">
    <location>
        <position position="424"/>
    </location>
    <ligand>
        <name>substrate</name>
    </ligand>
</feature>
<feature type="disulfide bond" evidence="1">
    <location>
        <begin position="119"/>
        <end position="127"/>
    </location>
</feature>
<accession>P06547</accession>
<comment type="catalytic activity">
    <reaction>
        <text>Hydrolysis of (1-&gt;4)-alpha-D-glucosidic linkages in polysaccharides so as to remove successive maltose units from the non-reducing ends of the chains.</text>
        <dbReference type="EC" id="3.2.1.2"/>
    </reaction>
</comment>
<comment type="cofactor">
    <cofactor evidence="1">
        <name>Ca(2+)</name>
        <dbReference type="ChEBI" id="CHEBI:29108"/>
    </cofactor>
    <text evidence="1">Binds 1 Ca(2+) ion per subunit.</text>
</comment>
<comment type="subunit">
    <text>Monomer.</text>
</comment>
<comment type="similarity">
    <text evidence="3">Belongs to the glycosyl hydrolase 14 family.</text>
</comment>
<proteinExistence type="inferred from homology"/>
<evidence type="ECO:0000250" key="1">
    <source>
        <dbReference type="UniProtKB" id="P36924"/>
    </source>
</evidence>
<evidence type="ECO:0000255" key="2">
    <source>
        <dbReference type="PROSITE-ProRule" id="PRU10050"/>
    </source>
</evidence>
<evidence type="ECO:0000305" key="3"/>
<dbReference type="EC" id="3.2.1.2"/>
<dbReference type="EMBL" id="Y00523">
    <property type="protein sequence ID" value="CAA68578.1"/>
    <property type="molecule type" value="Genomic_DNA"/>
</dbReference>
<dbReference type="PIR" id="S03745">
    <property type="entry name" value="S03745"/>
</dbReference>
<dbReference type="SMR" id="P06547"/>
<dbReference type="CAZy" id="CBM25">
    <property type="family name" value="Carbohydrate-Binding Module Family 25"/>
</dbReference>
<dbReference type="CAZy" id="GH14">
    <property type="family name" value="Glycoside Hydrolase Family 14"/>
</dbReference>
<dbReference type="BRENDA" id="3.2.1.2">
    <property type="organism ID" value="649"/>
</dbReference>
<dbReference type="GO" id="GO:0016161">
    <property type="term" value="F:beta-amylase activity"/>
    <property type="evidence" value="ECO:0007669"/>
    <property type="project" value="UniProtKB-EC"/>
</dbReference>
<dbReference type="GO" id="GO:0046872">
    <property type="term" value="F:metal ion binding"/>
    <property type="evidence" value="ECO:0007669"/>
    <property type="project" value="UniProtKB-KW"/>
</dbReference>
<dbReference type="GO" id="GO:2001070">
    <property type="term" value="F:starch binding"/>
    <property type="evidence" value="ECO:0007669"/>
    <property type="project" value="InterPro"/>
</dbReference>
<dbReference type="GO" id="GO:0000272">
    <property type="term" value="P:polysaccharide catabolic process"/>
    <property type="evidence" value="ECO:0007669"/>
    <property type="project" value="UniProtKB-KW"/>
</dbReference>
<dbReference type="Gene3D" id="3.20.20.80">
    <property type="entry name" value="Glycosidases"/>
    <property type="match status" value="1"/>
</dbReference>
<dbReference type="Gene3D" id="2.60.40.10">
    <property type="entry name" value="Immunoglobulins"/>
    <property type="match status" value="1"/>
</dbReference>
<dbReference type="InterPro" id="IPR005085">
    <property type="entry name" value="CBM25"/>
</dbReference>
<dbReference type="InterPro" id="IPR001554">
    <property type="entry name" value="Glyco_hydro_14"/>
</dbReference>
<dbReference type="InterPro" id="IPR018238">
    <property type="entry name" value="Glyco_hydro_14_CS"/>
</dbReference>
<dbReference type="InterPro" id="IPR000125">
    <property type="entry name" value="Glyco_hydro_14A_bac"/>
</dbReference>
<dbReference type="InterPro" id="IPR017853">
    <property type="entry name" value="Glycoside_hydrolase_SF"/>
</dbReference>
<dbReference type="InterPro" id="IPR013783">
    <property type="entry name" value="Ig-like_fold"/>
</dbReference>
<dbReference type="PANTHER" id="PTHR31352">
    <property type="entry name" value="BETA-AMYLASE 1, CHLOROPLASTIC"/>
    <property type="match status" value="1"/>
</dbReference>
<dbReference type="PANTHER" id="PTHR31352:SF1">
    <property type="entry name" value="BETA-AMYLASE 3, CHLOROPLASTIC"/>
    <property type="match status" value="1"/>
</dbReference>
<dbReference type="Pfam" id="PF03423">
    <property type="entry name" value="CBM_25"/>
    <property type="match status" value="1"/>
</dbReference>
<dbReference type="Pfam" id="PF01373">
    <property type="entry name" value="Glyco_hydro_14"/>
    <property type="match status" value="1"/>
</dbReference>
<dbReference type="PRINTS" id="PR00750">
    <property type="entry name" value="BETAAMYLASE"/>
</dbReference>
<dbReference type="PRINTS" id="PR00841">
    <property type="entry name" value="GLHYDLASE14A"/>
</dbReference>
<dbReference type="SMART" id="SM01066">
    <property type="entry name" value="CBM_25"/>
    <property type="match status" value="1"/>
</dbReference>
<dbReference type="SUPFAM" id="SSF51445">
    <property type="entry name" value="(Trans)glycosidases"/>
    <property type="match status" value="1"/>
</dbReference>
<dbReference type="PROSITE" id="PS00506">
    <property type="entry name" value="BETA_AMYLASE_1"/>
    <property type="match status" value="1"/>
</dbReference>
<dbReference type="PROSITE" id="PS00679">
    <property type="entry name" value="BETA_AMYLASE_2"/>
    <property type="match status" value="1"/>
</dbReference>